<reference key="1">
    <citation type="journal article" date="1998" name="Nature">
        <title>Deciphering the biology of Mycobacterium tuberculosis from the complete genome sequence.</title>
        <authorList>
            <person name="Cole S.T."/>
            <person name="Brosch R."/>
            <person name="Parkhill J."/>
            <person name="Garnier T."/>
            <person name="Churcher C.M."/>
            <person name="Harris D.E."/>
            <person name="Gordon S.V."/>
            <person name="Eiglmeier K."/>
            <person name="Gas S."/>
            <person name="Barry C.E. III"/>
            <person name="Tekaia F."/>
            <person name="Badcock K."/>
            <person name="Basham D."/>
            <person name="Brown D."/>
            <person name="Chillingworth T."/>
            <person name="Connor R."/>
            <person name="Davies R.M."/>
            <person name="Devlin K."/>
            <person name="Feltwell T."/>
            <person name="Gentles S."/>
            <person name="Hamlin N."/>
            <person name="Holroyd S."/>
            <person name="Hornsby T."/>
            <person name="Jagels K."/>
            <person name="Krogh A."/>
            <person name="McLean J."/>
            <person name="Moule S."/>
            <person name="Murphy L.D."/>
            <person name="Oliver S."/>
            <person name="Osborne J."/>
            <person name="Quail M.A."/>
            <person name="Rajandream M.A."/>
            <person name="Rogers J."/>
            <person name="Rutter S."/>
            <person name="Seeger K."/>
            <person name="Skelton S."/>
            <person name="Squares S."/>
            <person name="Squares R."/>
            <person name="Sulston J.E."/>
            <person name="Taylor K."/>
            <person name="Whitehead S."/>
            <person name="Barrell B.G."/>
        </authorList>
    </citation>
    <scope>NUCLEOTIDE SEQUENCE [LARGE SCALE GENOMIC DNA]</scope>
    <source>
        <strain>ATCC 25618 / H37Rv</strain>
    </source>
</reference>
<reference key="2">
    <citation type="journal article" date="2008" name="J. Mol. Biol.">
        <title>Crystal structure of Mycobacterium tuberculosis YefM antitoxin reveals that it is not an intrinsically unstructured protein.</title>
        <authorList>
            <person name="Kumar P."/>
            <person name="Issac B."/>
            <person name="Dodson E.J."/>
            <person name="Turkenburg J.P."/>
            <person name="Mande S.C."/>
        </authorList>
    </citation>
    <scope>SUBUNIT</scope>
    <source>
        <strain>ATCC 25618 / H37Rv</strain>
    </source>
</reference>
<reference key="3">
    <citation type="journal article" date="2009" name="J. Bacteriol.">
        <title>Three Mycobacterium tuberculosis Rel toxin-antitoxin modules inhibit mycobacterial growth and are expressed in infected human macrophages.</title>
        <authorList>
            <person name="Korch S.B."/>
            <person name="Contreras H."/>
            <person name="Clark-Curtiss J.E."/>
        </authorList>
    </citation>
    <scope>FUNCTION AS A TOXIN</scope>
    <scope>FUNCTION AS A TRANSCRIPTIONAL REGULATOR</scope>
    <scope>EXPRESSION IN M.SMEGMATIS</scope>
    <scope>INDUCTION</scope>
    <scope>OPERON STRUCTURE</scope>
    <source>
        <strain>ATCC 25618 / H37Rv</strain>
    </source>
</reference>
<reference key="4">
    <citation type="journal article" date="2009" name="PLoS Genet.">
        <title>Comprehensive functional analysis of Mycobacterium tuberculosis toxin-antitoxin systems: implications for pathogenesis, stress responses, and evolution.</title>
        <authorList>
            <person name="Ramage H.R."/>
            <person name="Connolly L.E."/>
            <person name="Cox J.S."/>
        </authorList>
    </citation>
    <scope>EXPRESSION IN M.SMEGMATIS</scope>
    <scope>FUNCTION AS A TOXIN</scope>
    <source>
        <strain>ATCC 35801 / TMC 107 / Erdman</strain>
    </source>
</reference>
<reference key="5">
    <citation type="journal article" date="2010" name="J. Bacteriol.">
        <title>The three RelE homologs of Mycobacterium tuberculosis have individual, drug-specific effects on bacterial antibiotic tolerance.</title>
        <authorList>
            <person name="Singh R."/>
            <person name="Barry C.E. III"/>
            <person name="Boshoff H.I."/>
        </authorList>
    </citation>
    <scope>FUNCTION IN M.TUBERCULOSIS</scope>
    <scope>INDUCTION</scope>
    <scope>DISRUPTION PHENOTYPE</scope>
    <scope>PUTATIVE FUNCTION IN PERSISTER CELL FORMATION</scope>
    <source>
        <strain>ATCC 27294 / TMC 102 / H37Rv</strain>
    </source>
</reference>
<reference key="6">
    <citation type="journal article" date="2010" name="PLoS ONE">
        <title>Characterization of the interaction and cross-regulation of three Mycobacterium tuberculosis RelBE modules.</title>
        <authorList>
            <person name="Yang M."/>
            <person name="Gao C."/>
            <person name="Wang Y."/>
            <person name="Zhang H."/>
            <person name="He Z.G."/>
        </authorList>
    </citation>
    <scope>FUNCTION AS A TOXIN</scope>
    <scope>SUBUNIT</scope>
    <scope>INTERACTION WITH RELB</scope>
    <source>
        <strain>ATCC 25618 / H37Rv</strain>
    </source>
</reference>
<dbReference type="EC" id="3.1.-.-"/>
<dbReference type="EMBL" id="AL123456">
    <property type="protein sequence ID" value="CCP46179.1"/>
    <property type="molecule type" value="Genomic_DNA"/>
</dbReference>
<dbReference type="PIR" id="E70970">
    <property type="entry name" value="E70970"/>
</dbReference>
<dbReference type="RefSeq" id="NP_217875.1">
    <property type="nucleotide sequence ID" value="NC_000962.3"/>
</dbReference>
<dbReference type="RefSeq" id="WP_003417760.1">
    <property type="nucleotide sequence ID" value="NZ_NVQJ01000052.1"/>
</dbReference>
<dbReference type="PDB" id="3OEI">
    <property type="method" value="X-ray"/>
    <property type="resolution" value="2.14 A"/>
    <property type="chains" value="C/D/G/H/K/L/O/P=2-85"/>
</dbReference>
<dbReference type="PDBsum" id="3OEI"/>
<dbReference type="SMR" id="P9WF09"/>
<dbReference type="FunCoup" id="P9WF09">
    <property type="interactions" value="1"/>
</dbReference>
<dbReference type="IntAct" id="P9WF09">
    <property type="interactions" value="2"/>
</dbReference>
<dbReference type="MINT" id="P9WF09"/>
<dbReference type="STRING" id="83332.Rv3358"/>
<dbReference type="PaxDb" id="83332-Rv3358"/>
<dbReference type="DNASU" id="888139"/>
<dbReference type="GeneID" id="888139"/>
<dbReference type="KEGG" id="mtu:Rv3358"/>
<dbReference type="KEGG" id="mtv:RVBD_3358"/>
<dbReference type="TubercuList" id="Rv3358"/>
<dbReference type="eggNOG" id="COG4115">
    <property type="taxonomic scope" value="Bacteria"/>
</dbReference>
<dbReference type="InParanoid" id="P9WF09"/>
<dbReference type="OrthoDB" id="9801102at2"/>
<dbReference type="PhylomeDB" id="P9WF09"/>
<dbReference type="EvolutionaryTrace" id="P9WF09"/>
<dbReference type="Proteomes" id="UP000001584">
    <property type="component" value="Chromosome"/>
</dbReference>
<dbReference type="GO" id="GO:0003677">
    <property type="term" value="F:DNA binding"/>
    <property type="evidence" value="ECO:0007669"/>
    <property type="project" value="UniProtKB-KW"/>
</dbReference>
<dbReference type="GO" id="GO:0004519">
    <property type="term" value="F:endonuclease activity"/>
    <property type="evidence" value="ECO:0000314"/>
    <property type="project" value="MTBBASE"/>
</dbReference>
<dbReference type="GO" id="GO:0045892">
    <property type="term" value="P:negative regulation of DNA-templated transcription"/>
    <property type="evidence" value="ECO:0000314"/>
    <property type="project" value="MTBBASE"/>
</dbReference>
<dbReference type="GO" id="GO:0006401">
    <property type="term" value="P:RNA catabolic process"/>
    <property type="evidence" value="ECO:0000314"/>
    <property type="project" value="MTBBASE"/>
</dbReference>
<dbReference type="Gene3D" id="3.30.2310.20">
    <property type="entry name" value="RelE-like"/>
    <property type="match status" value="1"/>
</dbReference>
<dbReference type="InterPro" id="IPR035093">
    <property type="entry name" value="RelE/ParE_toxin_dom_sf"/>
</dbReference>
<dbReference type="InterPro" id="IPR009614">
    <property type="entry name" value="YoeB_toxin"/>
</dbReference>
<dbReference type="NCBIfam" id="TIGR02116">
    <property type="entry name" value="toxin_Txe_YoeB"/>
    <property type="match status" value="1"/>
</dbReference>
<dbReference type="PANTHER" id="PTHR38039">
    <property type="entry name" value="TOXIN YOEB"/>
    <property type="match status" value="1"/>
</dbReference>
<dbReference type="PANTHER" id="PTHR38039:SF1">
    <property type="entry name" value="TOXIN YOEB"/>
    <property type="match status" value="1"/>
</dbReference>
<dbReference type="Pfam" id="PF06769">
    <property type="entry name" value="YoeB_toxin"/>
    <property type="match status" value="1"/>
</dbReference>
<dbReference type="SUPFAM" id="SSF143011">
    <property type="entry name" value="RelE-like"/>
    <property type="match status" value="1"/>
</dbReference>
<comment type="function">
    <text evidence="1 3 4 5 6">Toxic component of a type II toxin-antitoxin (TA) system. Has RNase activity and preferentially cleaves at the 3'-end of purine ribonucleotides (By similarity). Overexpression in M.tuberculosis or M.smegmatis inhibits colony formation in a bacteriostatic rather than bacteriocidal fashion. Its toxic effect is neutralized by coexpression with antitoxin RelJ (shown only for M.smegmatis). Overexpression also increases the number of rifampcin-tolerant persister cells.</text>
</comment>
<comment type="function">
    <text>In combination with RelJ represses its own promoter. Several DNA-protein complexes are formed in vitro depending on the RelJ:RelK ratio.</text>
</comment>
<comment type="subunit">
    <text evidence="2 6">Forms a toxin-antitoxin complex with RelJ, perhaps RelJ(2)-RelK, in which the toxin is probably inactive. Also interacts with antitoxins RelB and RelF in vitro, in M.smegmatis coexpression with non-cognate antitoxin RelB increases the toxicity of RelK while little change is seen in the RelFK pair.</text>
</comment>
<comment type="interaction">
    <interactant intactId="EBI-10091663">
        <id>P9WF09</id>
    </interactant>
    <interactant intactId="EBI-9354099">
        <id>P9WF25</id>
        <label>relJ</label>
    </interactant>
    <organismsDiffer>false</organismsDiffer>
    <experiments>4</experiments>
</comment>
<comment type="interaction">
    <interactant intactId="EBI-10091663">
        <id>P9WF09</id>
    </interactant>
    <interactant intactId="EBI-10091643">
        <id>I6Y1Q2</id>
        <label>sirR</label>
    </interactant>
    <organismsDiffer>false</organismsDiffer>
    <experiments>3</experiments>
</comment>
<comment type="induction">
    <text evidence="3 5">Expressed in log phase cells. Induced by treatment with rifampicin and gentamicin as well as by nitrosative and oxidative stress. Expressed in human macrophages 110 hours after infection. Induced in the lungs of mice infected for 4 weeks. A member of the relJK operon.</text>
</comment>
<comment type="disruption phenotype">
    <text evidence="5">No visible phenotype in culture or upon infection of mice. Significantly fewer persister cells are generated following exposure to gentamicin, levofloxacin and isoniazid.</text>
</comment>
<comment type="similarity">
    <text evidence="7">Belongs to the YoeB family.</text>
</comment>
<sequence>MRSVNFDPDAWEDFLFWLAADRKTARRITRLIGEIQRDPFSGIGKPEPLQGELSGYWSRRIDDEHRLVYRAGDDEVTMLKARYHY</sequence>
<evidence type="ECO:0000250" key="1"/>
<evidence type="ECO:0000269" key="2">
    <source>
    </source>
</evidence>
<evidence type="ECO:0000269" key="3">
    <source>
    </source>
</evidence>
<evidence type="ECO:0000269" key="4">
    <source>
    </source>
</evidence>
<evidence type="ECO:0000269" key="5">
    <source>
    </source>
</evidence>
<evidence type="ECO:0000269" key="6">
    <source>
    </source>
</evidence>
<evidence type="ECO:0000305" key="7"/>
<evidence type="ECO:0007829" key="8">
    <source>
        <dbReference type="PDB" id="3OEI"/>
    </source>
</evidence>
<accession>P9WF09</accession>
<accession>L0TCJ4</accession>
<accession>O50387</accession>
<accession>P64528</accession>
<proteinExistence type="evidence at protein level"/>
<feature type="chain" id="PRO_0000216213" description="Toxin RelK">
    <location>
        <begin position="1"/>
        <end position="85"/>
    </location>
</feature>
<feature type="active site" description="Proton acceptor" evidence="1">
    <location>
        <position position="47"/>
    </location>
</feature>
<feature type="active site" description="Proton donor" evidence="1">
    <location>
        <position position="84"/>
    </location>
</feature>
<feature type="strand" evidence="8">
    <location>
        <begin position="3"/>
        <end position="6"/>
    </location>
</feature>
<feature type="helix" evidence="8">
    <location>
        <begin position="8"/>
        <end position="20"/>
    </location>
</feature>
<feature type="helix" evidence="8">
    <location>
        <begin position="22"/>
        <end position="37"/>
    </location>
</feature>
<feature type="helix" evidence="8">
    <location>
        <begin position="51"/>
        <end position="53"/>
    </location>
</feature>
<feature type="strand" evidence="8">
    <location>
        <begin position="57"/>
        <end position="64"/>
    </location>
</feature>
<feature type="strand" evidence="8">
    <location>
        <begin position="66"/>
        <end position="71"/>
    </location>
</feature>
<feature type="strand" evidence="8">
    <location>
        <begin position="73"/>
        <end position="82"/>
    </location>
</feature>
<keyword id="KW-0002">3D-structure</keyword>
<keyword id="KW-0238">DNA-binding</keyword>
<keyword id="KW-0255">Endonuclease</keyword>
<keyword id="KW-0378">Hydrolase</keyword>
<keyword id="KW-0540">Nuclease</keyword>
<keyword id="KW-1185">Reference proteome</keyword>
<keyword id="KW-0678">Repressor</keyword>
<keyword id="KW-1277">Toxin-antitoxin system</keyword>
<keyword id="KW-0804">Transcription</keyword>
<keyword id="KW-0805">Transcription regulation</keyword>
<gene>
    <name type="primary">relK</name>
    <name type="synonym">relE3</name>
    <name type="synonym">yoeB</name>
    <name type="ordered locus">Rv3358</name>
    <name type="ORF">MTV004.15</name>
</gene>
<organism>
    <name type="scientific">Mycobacterium tuberculosis (strain ATCC 25618 / H37Rv)</name>
    <dbReference type="NCBI Taxonomy" id="83332"/>
    <lineage>
        <taxon>Bacteria</taxon>
        <taxon>Bacillati</taxon>
        <taxon>Actinomycetota</taxon>
        <taxon>Actinomycetes</taxon>
        <taxon>Mycobacteriales</taxon>
        <taxon>Mycobacteriaceae</taxon>
        <taxon>Mycobacterium</taxon>
        <taxon>Mycobacterium tuberculosis complex</taxon>
    </lineage>
</organism>
<protein>
    <recommendedName>
        <fullName>Toxin RelK</fullName>
        <ecNumber>3.1.-.-</ecNumber>
    </recommendedName>
    <alternativeName>
        <fullName>Endoribonuclease YoeB</fullName>
    </alternativeName>
    <alternativeName>
        <fullName>Putative mRNA interferase RelE3</fullName>
    </alternativeName>
    <alternativeName>
        <fullName>Putative mRNA interferase YoeB</fullName>
    </alternativeName>
    <alternativeName>
        <fullName>Toxin YoeB</fullName>
    </alternativeName>
</protein>
<name>RELK_MYCTU</name>